<name>SECA_CAUSK</name>
<evidence type="ECO:0000255" key="1">
    <source>
        <dbReference type="HAMAP-Rule" id="MF_01382"/>
    </source>
</evidence>
<feature type="chain" id="PRO_1000087309" description="Protein translocase subunit SecA">
    <location>
        <begin position="1"/>
        <end position="921"/>
    </location>
</feature>
<feature type="binding site" evidence="1">
    <location>
        <position position="86"/>
    </location>
    <ligand>
        <name>ATP</name>
        <dbReference type="ChEBI" id="CHEBI:30616"/>
    </ligand>
</feature>
<feature type="binding site" evidence="1">
    <location>
        <begin position="104"/>
        <end position="108"/>
    </location>
    <ligand>
        <name>ATP</name>
        <dbReference type="ChEBI" id="CHEBI:30616"/>
    </ligand>
</feature>
<feature type="binding site" evidence="1">
    <location>
        <position position="512"/>
    </location>
    <ligand>
        <name>ATP</name>
        <dbReference type="ChEBI" id="CHEBI:30616"/>
    </ligand>
</feature>
<feature type="binding site" evidence="1">
    <location>
        <position position="905"/>
    </location>
    <ligand>
        <name>Zn(2+)</name>
        <dbReference type="ChEBI" id="CHEBI:29105"/>
    </ligand>
</feature>
<feature type="binding site" evidence="1">
    <location>
        <position position="907"/>
    </location>
    <ligand>
        <name>Zn(2+)</name>
        <dbReference type="ChEBI" id="CHEBI:29105"/>
    </ligand>
</feature>
<feature type="binding site" evidence="1">
    <location>
        <position position="916"/>
    </location>
    <ligand>
        <name>Zn(2+)</name>
        <dbReference type="ChEBI" id="CHEBI:29105"/>
    </ligand>
</feature>
<feature type="binding site" evidence="1">
    <location>
        <position position="917"/>
    </location>
    <ligand>
        <name>Zn(2+)</name>
        <dbReference type="ChEBI" id="CHEBI:29105"/>
    </ligand>
</feature>
<sequence length="921" mass="103598">MLGFAKKFFGSSNERKVKAMSARVAQINALEPEYAALSDEALKAKTEEFKARLAKGEPLDSLLVEAFAVVREAGKRVLGMRHFDVQMVGGMVLHGGGISEMRTGEGKTLVATLPTYLNALEGKGVHVITVNDYLAKRDAEWMGQIHNFLGLSYGVIVNGLSQGERQRAYRSDITYGTNNEFGFDYLRDNLVYSVEEMVQRGHHYVIVDEVDSILIDEARTPLIISGPTEDRSEFYKTIDVLVKDLIKDKTNFDHDEKQKQVILTEEGQERIEEILMAGGHLAEDTAGLYDAANISIVHHVNQALRANVLYTFDKDYIVKDDEVILIDEFTGRMMTGRRLSEGLHQAIEAKEGVSVQPENQTLASVTIQNYFRLYKKLAGMTGTAATEAQEFDDIYKMGVSEIPTNRPVLRIDDDDEVYRTEREKNDSILKQITDCHARGQPILVGTVSIEKSEELSRLLATYAWEWEGKKHTGIPHQVLNARFHEQEAGIVADAGVPGAVTIATNMAGRGTDIQLGGNMDMRLANWRQQQKGLGITPTHEDELAQRAELEIEIGAAKARALAAGGLFVLGTERHESRRIDNQLRGRTGRQGDPGRSKFFLSCEDDLLRIFAGERLDAIMRTFGVQEGEAITHKWLNNAIATAQKRVEQRNYEIRKNLLKYDDVVNDQRKAVFEQRQEFMEATDLSDIITEMRHDVIDDFIARYMPPKAYAEQWDIEGLDERVQAILGLTLPLKEWAAEEGFGDEEMRERLNKAADEYAAQREAIITPEQMRSVEKNFLLQMIDLQWREHLMHLDHLRNVIGLRGYGQRDPLNEYKTEAFSLFEKLLGDLRTNTTRWLMTVEIAYAEPEPLHTPEGLVEVHLDPLSGENVATAGALPEGLSPQQREALPVSVLPEGWEYTARNGACPCGSGKKFKHCHGALV</sequence>
<gene>
    <name evidence="1" type="primary">secA</name>
    <name type="ordered locus">Caul_0922</name>
</gene>
<dbReference type="EC" id="7.4.2.8" evidence="1"/>
<dbReference type="EMBL" id="CP000927">
    <property type="protein sequence ID" value="ABZ70053.1"/>
    <property type="molecule type" value="Genomic_DNA"/>
</dbReference>
<dbReference type="SMR" id="B0SVL4"/>
<dbReference type="STRING" id="366602.Caul_0922"/>
<dbReference type="KEGG" id="cak:Caul_0922"/>
<dbReference type="eggNOG" id="COG0653">
    <property type="taxonomic scope" value="Bacteria"/>
</dbReference>
<dbReference type="HOGENOM" id="CLU_005314_3_0_5"/>
<dbReference type="OrthoDB" id="9805579at2"/>
<dbReference type="GO" id="GO:0031522">
    <property type="term" value="C:cell envelope Sec protein transport complex"/>
    <property type="evidence" value="ECO:0007669"/>
    <property type="project" value="TreeGrafter"/>
</dbReference>
<dbReference type="GO" id="GO:0005829">
    <property type="term" value="C:cytosol"/>
    <property type="evidence" value="ECO:0007669"/>
    <property type="project" value="TreeGrafter"/>
</dbReference>
<dbReference type="GO" id="GO:0005886">
    <property type="term" value="C:plasma membrane"/>
    <property type="evidence" value="ECO:0007669"/>
    <property type="project" value="UniProtKB-SubCell"/>
</dbReference>
<dbReference type="GO" id="GO:0005524">
    <property type="term" value="F:ATP binding"/>
    <property type="evidence" value="ECO:0007669"/>
    <property type="project" value="UniProtKB-UniRule"/>
</dbReference>
<dbReference type="GO" id="GO:0046872">
    <property type="term" value="F:metal ion binding"/>
    <property type="evidence" value="ECO:0007669"/>
    <property type="project" value="UniProtKB-KW"/>
</dbReference>
<dbReference type="GO" id="GO:0008564">
    <property type="term" value="F:protein-exporting ATPase activity"/>
    <property type="evidence" value="ECO:0007669"/>
    <property type="project" value="UniProtKB-EC"/>
</dbReference>
<dbReference type="GO" id="GO:0065002">
    <property type="term" value="P:intracellular protein transmembrane transport"/>
    <property type="evidence" value="ECO:0007669"/>
    <property type="project" value="UniProtKB-UniRule"/>
</dbReference>
<dbReference type="GO" id="GO:0017038">
    <property type="term" value="P:protein import"/>
    <property type="evidence" value="ECO:0007669"/>
    <property type="project" value="InterPro"/>
</dbReference>
<dbReference type="GO" id="GO:0006605">
    <property type="term" value="P:protein targeting"/>
    <property type="evidence" value="ECO:0007669"/>
    <property type="project" value="UniProtKB-UniRule"/>
</dbReference>
<dbReference type="GO" id="GO:0043952">
    <property type="term" value="P:protein transport by the Sec complex"/>
    <property type="evidence" value="ECO:0007669"/>
    <property type="project" value="TreeGrafter"/>
</dbReference>
<dbReference type="CDD" id="cd17928">
    <property type="entry name" value="DEXDc_SecA"/>
    <property type="match status" value="1"/>
</dbReference>
<dbReference type="CDD" id="cd18803">
    <property type="entry name" value="SF2_C_secA"/>
    <property type="match status" value="1"/>
</dbReference>
<dbReference type="FunFam" id="3.40.50.300:FF:000113">
    <property type="entry name" value="Preprotein translocase subunit SecA"/>
    <property type="match status" value="1"/>
</dbReference>
<dbReference type="FunFam" id="3.90.1440.10:FF:000001">
    <property type="entry name" value="Preprotein translocase subunit SecA"/>
    <property type="match status" value="1"/>
</dbReference>
<dbReference type="FunFam" id="1.10.3060.10:FF:000003">
    <property type="entry name" value="Protein translocase subunit SecA"/>
    <property type="match status" value="1"/>
</dbReference>
<dbReference type="FunFam" id="3.40.50.300:FF:000334">
    <property type="entry name" value="Protein translocase subunit SecA"/>
    <property type="match status" value="1"/>
</dbReference>
<dbReference type="Gene3D" id="3.10.450.50">
    <property type="match status" value="1"/>
</dbReference>
<dbReference type="Gene3D" id="1.10.3060.10">
    <property type="entry name" value="Helical scaffold and wing domains of SecA"/>
    <property type="match status" value="1"/>
</dbReference>
<dbReference type="Gene3D" id="3.40.50.300">
    <property type="entry name" value="P-loop containing nucleotide triphosphate hydrolases"/>
    <property type="match status" value="2"/>
</dbReference>
<dbReference type="Gene3D" id="3.90.1440.10">
    <property type="entry name" value="SecA, preprotein cross-linking domain"/>
    <property type="match status" value="1"/>
</dbReference>
<dbReference type="HAMAP" id="MF_01382">
    <property type="entry name" value="SecA"/>
    <property type="match status" value="1"/>
</dbReference>
<dbReference type="InterPro" id="IPR014001">
    <property type="entry name" value="Helicase_ATP-bd"/>
</dbReference>
<dbReference type="InterPro" id="IPR027417">
    <property type="entry name" value="P-loop_NTPase"/>
</dbReference>
<dbReference type="InterPro" id="IPR004027">
    <property type="entry name" value="SEC_C_motif"/>
</dbReference>
<dbReference type="InterPro" id="IPR000185">
    <property type="entry name" value="SecA"/>
</dbReference>
<dbReference type="InterPro" id="IPR020937">
    <property type="entry name" value="SecA_CS"/>
</dbReference>
<dbReference type="InterPro" id="IPR011115">
    <property type="entry name" value="SecA_DEAD"/>
</dbReference>
<dbReference type="InterPro" id="IPR014018">
    <property type="entry name" value="SecA_motor_DEAD"/>
</dbReference>
<dbReference type="InterPro" id="IPR011130">
    <property type="entry name" value="SecA_preprotein_X-link_dom"/>
</dbReference>
<dbReference type="InterPro" id="IPR044722">
    <property type="entry name" value="SecA_SF2_C"/>
</dbReference>
<dbReference type="InterPro" id="IPR011116">
    <property type="entry name" value="SecA_Wing/Scaffold"/>
</dbReference>
<dbReference type="InterPro" id="IPR036266">
    <property type="entry name" value="SecA_Wing/Scaffold_sf"/>
</dbReference>
<dbReference type="InterPro" id="IPR036670">
    <property type="entry name" value="SecA_X-link_sf"/>
</dbReference>
<dbReference type="NCBIfam" id="NF009538">
    <property type="entry name" value="PRK12904.1"/>
    <property type="match status" value="1"/>
</dbReference>
<dbReference type="NCBIfam" id="TIGR00963">
    <property type="entry name" value="secA"/>
    <property type="match status" value="1"/>
</dbReference>
<dbReference type="PANTHER" id="PTHR30612:SF0">
    <property type="entry name" value="CHLOROPLAST PROTEIN-TRANSPORTING ATPASE"/>
    <property type="match status" value="1"/>
</dbReference>
<dbReference type="PANTHER" id="PTHR30612">
    <property type="entry name" value="SECA INNER MEMBRANE COMPONENT OF SEC PROTEIN SECRETION SYSTEM"/>
    <property type="match status" value="1"/>
</dbReference>
<dbReference type="Pfam" id="PF21090">
    <property type="entry name" value="P-loop_SecA"/>
    <property type="match status" value="1"/>
</dbReference>
<dbReference type="Pfam" id="PF02810">
    <property type="entry name" value="SEC-C"/>
    <property type="match status" value="1"/>
</dbReference>
<dbReference type="Pfam" id="PF07517">
    <property type="entry name" value="SecA_DEAD"/>
    <property type="match status" value="1"/>
</dbReference>
<dbReference type="Pfam" id="PF01043">
    <property type="entry name" value="SecA_PP_bind"/>
    <property type="match status" value="1"/>
</dbReference>
<dbReference type="Pfam" id="PF07516">
    <property type="entry name" value="SecA_SW"/>
    <property type="match status" value="1"/>
</dbReference>
<dbReference type="PRINTS" id="PR00906">
    <property type="entry name" value="SECA"/>
</dbReference>
<dbReference type="SMART" id="SM00957">
    <property type="entry name" value="SecA_DEAD"/>
    <property type="match status" value="1"/>
</dbReference>
<dbReference type="SMART" id="SM00958">
    <property type="entry name" value="SecA_PP_bind"/>
    <property type="match status" value="1"/>
</dbReference>
<dbReference type="SUPFAM" id="SSF81886">
    <property type="entry name" value="Helical scaffold and wing domains of SecA"/>
    <property type="match status" value="1"/>
</dbReference>
<dbReference type="SUPFAM" id="SSF52540">
    <property type="entry name" value="P-loop containing nucleoside triphosphate hydrolases"/>
    <property type="match status" value="2"/>
</dbReference>
<dbReference type="SUPFAM" id="SSF81767">
    <property type="entry name" value="Pre-protein crosslinking domain of SecA"/>
    <property type="match status" value="1"/>
</dbReference>
<dbReference type="PROSITE" id="PS01312">
    <property type="entry name" value="SECA"/>
    <property type="match status" value="1"/>
</dbReference>
<dbReference type="PROSITE" id="PS51196">
    <property type="entry name" value="SECA_MOTOR_DEAD"/>
    <property type="match status" value="1"/>
</dbReference>
<keyword id="KW-0067">ATP-binding</keyword>
<keyword id="KW-0997">Cell inner membrane</keyword>
<keyword id="KW-1003">Cell membrane</keyword>
<keyword id="KW-0963">Cytoplasm</keyword>
<keyword id="KW-0472">Membrane</keyword>
<keyword id="KW-0479">Metal-binding</keyword>
<keyword id="KW-0547">Nucleotide-binding</keyword>
<keyword id="KW-0653">Protein transport</keyword>
<keyword id="KW-1278">Translocase</keyword>
<keyword id="KW-0811">Translocation</keyword>
<keyword id="KW-0813">Transport</keyword>
<keyword id="KW-0862">Zinc</keyword>
<comment type="function">
    <text evidence="1">Part of the Sec protein translocase complex. Interacts with the SecYEG preprotein conducting channel. Has a central role in coupling the hydrolysis of ATP to the transfer of proteins into and across the cell membrane, serving both as a receptor for the preprotein-SecB complex and as an ATP-driven molecular motor driving the stepwise translocation of polypeptide chains across the membrane.</text>
</comment>
<comment type="catalytic activity">
    <reaction evidence="1">
        <text>ATP + H2O + cellular proteinSide 1 = ADP + phosphate + cellular proteinSide 2.</text>
        <dbReference type="EC" id="7.4.2.8"/>
    </reaction>
</comment>
<comment type="cofactor">
    <cofactor evidence="1">
        <name>Zn(2+)</name>
        <dbReference type="ChEBI" id="CHEBI:29105"/>
    </cofactor>
    <text evidence="1">May bind 1 zinc ion per subunit.</text>
</comment>
<comment type="subunit">
    <text evidence="1">Monomer and homodimer. Part of the essential Sec protein translocation apparatus which comprises SecA, SecYEG and auxiliary proteins SecDF-YajC and YidC.</text>
</comment>
<comment type="subcellular location">
    <subcellularLocation>
        <location evidence="1">Cell inner membrane</location>
        <topology evidence="1">Peripheral membrane protein</topology>
        <orientation evidence="1">Cytoplasmic side</orientation>
    </subcellularLocation>
    <subcellularLocation>
        <location evidence="1">Cytoplasm</location>
    </subcellularLocation>
    <text evidence="1">Distribution is 50-50.</text>
</comment>
<comment type="similarity">
    <text evidence="1">Belongs to the SecA family.</text>
</comment>
<organism>
    <name type="scientific">Caulobacter sp. (strain K31)</name>
    <dbReference type="NCBI Taxonomy" id="366602"/>
    <lineage>
        <taxon>Bacteria</taxon>
        <taxon>Pseudomonadati</taxon>
        <taxon>Pseudomonadota</taxon>
        <taxon>Alphaproteobacteria</taxon>
        <taxon>Caulobacterales</taxon>
        <taxon>Caulobacteraceae</taxon>
        <taxon>Caulobacter</taxon>
    </lineage>
</organism>
<reference key="1">
    <citation type="submission" date="2008-01" db="EMBL/GenBank/DDBJ databases">
        <title>Complete sequence of chromosome of Caulobacter sp. K31.</title>
        <authorList>
            <consortium name="US DOE Joint Genome Institute"/>
            <person name="Copeland A."/>
            <person name="Lucas S."/>
            <person name="Lapidus A."/>
            <person name="Barry K."/>
            <person name="Glavina del Rio T."/>
            <person name="Dalin E."/>
            <person name="Tice H."/>
            <person name="Pitluck S."/>
            <person name="Bruce D."/>
            <person name="Goodwin L."/>
            <person name="Thompson L.S."/>
            <person name="Brettin T."/>
            <person name="Detter J.C."/>
            <person name="Han C."/>
            <person name="Schmutz J."/>
            <person name="Larimer F."/>
            <person name="Land M."/>
            <person name="Hauser L."/>
            <person name="Kyrpides N."/>
            <person name="Kim E."/>
            <person name="Stephens C."/>
            <person name="Richardson P."/>
        </authorList>
    </citation>
    <scope>NUCLEOTIDE SEQUENCE [LARGE SCALE GENOMIC DNA]</scope>
    <source>
        <strain>K31</strain>
    </source>
</reference>
<accession>B0SVL4</accession>
<protein>
    <recommendedName>
        <fullName evidence="1">Protein translocase subunit SecA</fullName>
        <ecNumber evidence="1">7.4.2.8</ecNumber>
    </recommendedName>
</protein>
<proteinExistence type="inferred from homology"/>